<feature type="chain" id="PRO_0000225042" description="UDP-N-acetylglucosamine--N-acetylmuramyl-(pentapeptide) pyrophosphoryl-undecaprenol N-acetylglucosamine transferase">
    <location>
        <begin position="1"/>
        <end position="352"/>
    </location>
</feature>
<feature type="binding site" evidence="1">
    <location>
        <begin position="14"/>
        <end position="16"/>
    </location>
    <ligand>
        <name>UDP-N-acetyl-alpha-D-glucosamine</name>
        <dbReference type="ChEBI" id="CHEBI:57705"/>
    </ligand>
</feature>
<feature type="binding site" evidence="1">
    <location>
        <position position="124"/>
    </location>
    <ligand>
        <name>UDP-N-acetyl-alpha-D-glucosamine</name>
        <dbReference type="ChEBI" id="CHEBI:57705"/>
    </ligand>
</feature>
<feature type="binding site" evidence="1">
    <location>
        <position position="164"/>
    </location>
    <ligand>
        <name>UDP-N-acetyl-alpha-D-glucosamine</name>
        <dbReference type="ChEBI" id="CHEBI:57705"/>
    </ligand>
</feature>
<feature type="binding site" evidence="1">
    <location>
        <position position="185"/>
    </location>
    <ligand>
        <name>UDP-N-acetyl-alpha-D-glucosamine</name>
        <dbReference type="ChEBI" id="CHEBI:57705"/>
    </ligand>
</feature>
<feature type="binding site" evidence="1">
    <location>
        <position position="285"/>
    </location>
    <ligand>
        <name>UDP-N-acetyl-alpha-D-glucosamine</name>
        <dbReference type="ChEBI" id="CHEBI:57705"/>
    </ligand>
</feature>
<name>MURG_CHLTA</name>
<evidence type="ECO:0000255" key="1">
    <source>
        <dbReference type="HAMAP-Rule" id="MF_00033"/>
    </source>
</evidence>
<protein>
    <recommendedName>
        <fullName evidence="1">UDP-N-acetylglucosamine--N-acetylmuramyl-(pentapeptide) pyrophosphoryl-undecaprenol N-acetylglucosamine transferase</fullName>
        <ecNumber evidence="1">2.4.1.227</ecNumber>
    </recommendedName>
    <alternativeName>
        <fullName evidence="1">Undecaprenyl-PP-MurNAc-pentapeptide-UDPGlcNAc GlcNAc transferase</fullName>
    </alternativeName>
</protein>
<proteinExistence type="inferred from homology"/>
<organism>
    <name type="scientific">Chlamydia trachomatis serovar A (strain ATCC VR-571B / DSM 19440 / HAR-13)</name>
    <dbReference type="NCBI Taxonomy" id="315277"/>
    <lineage>
        <taxon>Bacteria</taxon>
        <taxon>Pseudomonadati</taxon>
        <taxon>Chlamydiota</taxon>
        <taxon>Chlamydiia</taxon>
        <taxon>Chlamydiales</taxon>
        <taxon>Chlamydiaceae</taxon>
        <taxon>Chlamydia/Chlamydophila group</taxon>
        <taxon>Chlamydia</taxon>
    </lineage>
</organism>
<comment type="function">
    <text evidence="1">Cell wall formation. Catalyzes the transfer of a GlcNAc subunit on undecaprenyl-pyrophosphoryl-MurNAc-pentapeptide (lipid intermediate I) to form undecaprenyl-pyrophosphoryl-MurNAc-(pentapeptide)GlcNAc (lipid intermediate II).</text>
</comment>
<comment type="catalytic activity">
    <reaction evidence="1">
        <text>di-trans,octa-cis-undecaprenyl diphospho-N-acetyl-alpha-D-muramoyl-L-alanyl-D-glutamyl-meso-2,6-diaminopimeloyl-D-alanyl-D-alanine + UDP-N-acetyl-alpha-D-glucosamine = di-trans,octa-cis-undecaprenyl diphospho-[N-acetyl-alpha-D-glucosaminyl-(1-&gt;4)]-N-acetyl-alpha-D-muramoyl-L-alanyl-D-glutamyl-meso-2,6-diaminopimeloyl-D-alanyl-D-alanine + UDP + H(+)</text>
        <dbReference type="Rhea" id="RHEA:31227"/>
        <dbReference type="ChEBI" id="CHEBI:15378"/>
        <dbReference type="ChEBI" id="CHEBI:57705"/>
        <dbReference type="ChEBI" id="CHEBI:58223"/>
        <dbReference type="ChEBI" id="CHEBI:61387"/>
        <dbReference type="ChEBI" id="CHEBI:61388"/>
        <dbReference type="EC" id="2.4.1.227"/>
    </reaction>
</comment>
<comment type="pathway">
    <text evidence="1">Cell wall biogenesis; peptidoglycan biosynthesis.</text>
</comment>
<comment type="subcellular location">
    <subcellularLocation>
        <location evidence="1">Cell inner membrane</location>
        <topology evidence="1">Peripheral membrane protein</topology>
        <orientation evidence="1">Cytoplasmic side</orientation>
    </subcellularLocation>
</comment>
<comment type="similarity">
    <text evidence="1">Belongs to the glycosyltransferase 28 family. MurG subfamily.</text>
</comment>
<sequence>MKKINKIVLAVGGTGGHIIPALAARETFIHEDIEVLLLGKGLAHFLGDDSEVAYCDIPSGSPFSLRVNRMFSGAKQLYKGYVAALQKIRDFTPDLAIGFGSYHSLPAMLASIRSRIPLFLHEQNIVPGKVNKLFSRFAKGVGMSFAAAGEHFHCRAEEVFLPIRKLSEQIVFPGASPVICVVGGSQGAKILNDVVPKALARIRESYSNLYVHHIVGPKGDLQAVSQVYQDAGINHTVTAFDHNMLGVLQASDLVISRSGATMLNELLWVQVPAILIPYPGAYGHQEVNAKFFTHTVGGGTMILQKYLTEESLSKQVLLALDPATSENRRKAMLSAQQKKSFKSLYQFICESL</sequence>
<reference key="1">
    <citation type="journal article" date="2005" name="Infect. Immun.">
        <title>Comparative genomic analysis of Chlamydia trachomatis oculotropic and genitotropic strains.</title>
        <authorList>
            <person name="Carlson J.H."/>
            <person name="Porcella S.F."/>
            <person name="McClarty G."/>
            <person name="Caldwell H.D."/>
        </authorList>
    </citation>
    <scope>NUCLEOTIDE SEQUENCE [LARGE SCALE GENOMIC DNA]</scope>
    <source>
        <strain>ATCC VR-571B / DSM 19440 / HAR-13</strain>
    </source>
</reference>
<accession>Q3KKT1</accession>
<dbReference type="EC" id="2.4.1.227" evidence="1"/>
<dbReference type="EMBL" id="CP000051">
    <property type="protein sequence ID" value="AAX51041.1"/>
    <property type="molecule type" value="Genomic_DNA"/>
</dbReference>
<dbReference type="RefSeq" id="WP_009872141.1">
    <property type="nucleotide sequence ID" value="NC_007429.1"/>
</dbReference>
<dbReference type="SMR" id="Q3KKT1"/>
<dbReference type="CAZy" id="GT28">
    <property type="family name" value="Glycosyltransferase Family 28"/>
</dbReference>
<dbReference type="KEGG" id="cta:CTA_0831"/>
<dbReference type="HOGENOM" id="CLU_037404_2_1_0"/>
<dbReference type="UniPathway" id="UPA00219"/>
<dbReference type="Proteomes" id="UP000002532">
    <property type="component" value="Chromosome"/>
</dbReference>
<dbReference type="GO" id="GO:0005886">
    <property type="term" value="C:plasma membrane"/>
    <property type="evidence" value="ECO:0007669"/>
    <property type="project" value="UniProtKB-SubCell"/>
</dbReference>
<dbReference type="GO" id="GO:0051991">
    <property type="term" value="F:UDP-N-acetyl-D-glucosamine:N-acetylmuramoyl-L-alanyl-D-glutamyl-meso-2,6-diaminopimelyl-D-alanyl-D-alanine-diphosphoundecaprenol 4-beta-N-acetylglucosaminlytransferase activity"/>
    <property type="evidence" value="ECO:0007669"/>
    <property type="project" value="RHEA"/>
</dbReference>
<dbReference type="GO" id="GO:0050511">
    <property type="term" value="F:undecaprenyldiphospho-muramoylpentapeptide beta-N-acetylglucosaminyltransferase activity"/>
    <property type="evidence" value="ECO:0007669"/>
    <property type="project" value="UniProtKB-UniRule"/>
</dbReference>
<dbReference type="GO" id="GO:0005975">
    <property type="term" value="P:carbohydrate metabolic process"/>
    <property type="evidence" value="ECO:0007669"/>
    <property type="project" value="InterPro"/>
</dbReference>
<dbReference type="GO" id="GO:0051301">
    <property type="term" value="P:cell division"/>
    <property type="evidence" value="ECO:0007669"/>
    <property type="project" value="UniProtKB-KW"/>
</dbReference>
<dbReference type="GO" id="GO:0071555">
    <property type="term" value="P:cell wall organization"/>
    <property type="evidence" value="ECO:0007669"/>
    <property type="project" value="UniProtKB-KW"/>
</dbReference>
<dbReference type="GO" id="GO:0030259">
    <property type="term" value="P:lipid glycosylation"/>
    <property type="evidence" value="ECO:0007669"/>
    <property type="project" value="UniProtKB-UniRule"/>
</dbReference>
<dbReference type="GO" id="GO:0009252">
    <property type="term" value="P:peptidoglycan biosynthetic process"/>
    <property type="evidence" value="ECO:0007669"/>
    <property type="project" value="UniProtKB-UniRule"/>
</dbReference>
<dbReference type="GO" id="GO:0008360">
    <property type="term" value="P:regulation of cell shape"/>
    <property type="evidence" value="ECO:0007669"/>
    <property type="project" value="UniProtKB-KW"/>
</dbReference>
<dbReference type="CDD" id="cd03785">
    <property type="entry name" value="GT28_MurG"/>
    <property type="match status" value="1"/>
</dbReference>
<dbReference type="Gene3D" id="3.40.50.2000">
    <property type="entry name" value="Glycogen Phosphorylase B"/>
    <property type="match status" value="2"/>
</dbReference>
<dbReference type="HAMAP" id="MF_00033">
    <property type="entry name" value="MurG"/>
    <property type="match status" value="1"/>
</dbReference>
<dbReference type="InterPro" id="IPR006009">
    <property type="entry name" value="GlcNAc_MurG"/>
</dbReference>
<dbReference type="InterPro" id="IPR007235">
    <property type="entry name" value="Glyco_trans_28_C"/>
</dbReference>
<dbReference type="InterPro" id="IPR004276">
    <property type="entry name" value="GlycoTrans_28_N"/>
</dbReference>
<dbReference type="NCBIfam" id="TIGR01133">
    <property type="entry name" value="murG"/>
    <property type="match status" value="1"/>
</dbReference>
<dbReference type="PANTHER" id="PTHR21015:SF22">
    <property type="entry name" value="GLYCOSYLTRANSFERASE"/>
    <property type="match status" value="1"/>
</dbReference>
<dbReference type="PANTHER" id="PTHR21015">
    <property type="entry name" value="UDP-N-ACETYLGLUCOSAMINE--N-ACETYLMURAMYL-(PENTAPEPTIDE) PYROPHOSPHORYL-UNDECAPRENOL N-ACETYLGLUCOSAMINE TRANSFERASE 1"/>
    <property type="match status" value="1"/>
</dbReference>
<dbReference type="Pfam" id="PF04101">
    <property type="entry name" value="Glyco_tran_28_C"/>
    <property type="match status" value="1"/>
</dbReference>
<dbReference type="Pfam" id="PF03033">
    <property type="entry name" value="Glyco_transf_28"/>
    <property type="match status" value="1"/>
</dbReference>
<dbReference type="SUPFAM" id="SSF53756">
    <property type="entry name" value="UDP-Glycosyltransferase/glycogen phosphorylase"/>
    <property type="match status" value="1"/>
</dbReference>
<gene>
    <name evidence="1" type="primary">murG</name>
    <name type="ordered locus">CTA_0831</name>
</gene>
<keyword id="KW-0131">Cell cycle</keyword>
<keyword id="KW-0132">Cell division</keyword>
<keyword id="KW-0997">Cell inner membrane</keyword>
<keyword id="KW-1003">Cell membrane</keyword>
<keyword id="KW-0133">Cell shape</keyword>
<keyword id="KW-0961">Cell wall biogenesis/degradation</keyword>
<keyword id="KW-0328">Glycosyltransferase</keyword>
<keyword id="KW-0472">Membrane</keyword>
<keyword id="KW-0573">Peptidoglycan synthesis</keyword>
<keyword id="KW-0808">Transferase</keyword>